<proteinExistence type="evidence at transcript level"/>
<protein>
    <recommendedName>
        <fullName>Trafficking protein particle complex subunit 13</fullName>
    </recommendedName>
</protein>
<accession>Q6PBY7</accession>
<organism>
    <name type="scientific">Danio rerio</name>
    <name type="common">Zebrafish</name>
    <name type="synonym">Brachydanio rerio</name>
    <dbReference type="NCBI Taxonomy" id="7955"/>
    <lineage>
        <taxon>Eukaryota</taxon>
        <taxon>Metazoa</taxon>
        <taxon>Chordata</taxon>
        <taxon>Craniata</taxon>
        <taxon>Vertebrata</taxon>
        <taxon>Euteleostomi</taxon>
        <taxon>Actinopterygii</taxon>
        <taxon>Neopterygii</taxon>
        <taxon>Teleostei</taxon>
        <taxon>Ostariophysi</taxon>
        <taxon>Cypriniformes</taxon>
        <taxon>Danionidae</taxon>
        <taxon>Danioninae</taxon>
        <taxon>Danio</taxon>
    </lineage>
</organism>
<gene>
    <name type="primary">trappc13</name>
    <name type="ORF">zgc:73187</name>
</gene>
<comment type="subunit">
    <text evidence="1">Part of the multisubunit TRAPP (transport protein particle) complex.</text>
</comment>
<comment type="similarity">
    <text evidence="2">Belongs to the TRAPPC13 family.</text>
</comment>
<comment type="sequence caution" evidence="2">
    <conflict type="erroneous initiation">
        <sequence resource="EMBL-CDS" id="AAH59537"/>
    </conflict>
    <text>Truncated N-terminus.</text>
</comment>
<comment type="sequence caution" evidence="2">
    <conflict type="erroneous initiation">
        <sequence resource="EMBL-CDS" id="AAH71349"/>
    </conflict>
    <text>Truncated N-terminus.</text>
</comment>
<name>TPC13_DANRE</name>
<reference key="1">
    <citation type="submission" date="2003-10" db="EMBL/GenBank/DDBJ databases">
        <authorList>
            <consortium name="NIH - Zebrafish Gene Collection (ZGC) project"/>
        </authorList>
    </citation>
    <scope>NUCLEOTIDE SEQUENCE [LARGE SCALE MRNA]</scope>
    <source>
        <tissue>Embryo</tissue>
        <tissue>Eye</tissue>
    </source>
</reference>
<keyword id="KW-1185">Reference proteome</keyword>
<sequence>MDVNQAKQEHLLALKVMRLTKPTLFTNMPVTCEDRDLPGDLFLRLMKDDPSTVKGAETLILGEMLTLPQNFGNIFLGETFSSYISVHNDSSQVVKDILVKADLQTSSQRLNLSASNSAVSELKPECCIDDVIHHEVKEIGTHILVCAVSYTTQTGEKLYFRKFFKFQVLKPLDVKTKFYNAETDEVFLEAQIQNITTSPMFMEKVSLEPSMMYNVTELNNVASGDESSESTFGKMSYLQPLDTRQYLYCLKPKPEFAEKAGVIKGVTVIGKLDIVWKTNLGERGRLQTSQLQRMAPGYGDVRLSLEFIPDTVDLEEPFDITCKITNCSERTMDLLLEMCNTRSVHWCGVSGRQLGKLSPSASLSIPLKLLSSVQGLQSISGLRLTDTFLKRTYEYDDIAQVCVVCPYTSPES</sequence>
<evidence type="ECO:0000250" key="1"/>
<evidence type="ECO:0000305" key="2"/>
<dbReference type="EMBL" id="BC059537">
    <property type="protein sequence ID" value="AAH59537.1"/>
    <property type="status" value="ALT_INIT"/>
    <property type="molecule type" value="mRNA"/>
</dbReference>
<dbReference type="EMBL" id="BC071349">
    <property type="protein sequence ID" value="AAH71349.1"/>
    <property type="status" value="ALT_INIT"/>
    <property type="molecule type" value="mRNA"/>
</dbReference>
<dbReference type="RefSeq" id="NP_955832.2">
    <property type="nucleotide sequence ID" value="NM_199538.2"/>
</dbReference>
<dbReference type="FunCoup" id="Q6PBY7">
    <property type="interactions" value="1337"/>
</dbReference>
<dbReference type="STRING" id="7955.ENSDARP00000046273"/>
<dbReference type="PaxDb" id="7955-ENSDARP00000046273"/>
<dbReference type="Ensembl" id="ENSDART00000046274">
    <property type="protein sequence ID" value="ENSDARP00000046273"/>
    <property type="gene ID" value="ENSDARG00000033768"/>
</dbReference>
<dbReference type="GeneID" id="321203"/>
<dbReference type="KEGG" id="dre:321203"/>
<dbReference type="AGR" id="ZFIN:ZDB-GENE-030131-9775"/>
<dbReference type="CTD" id="80006"/>
<dbReference type="ZFIN" id="ZDB-GENE-030131-9775">
    <property type="gene designation" value="trappc13"/>
</dbReference>
<dbReference type="eggNOG" id="KOG2625">
    <property type="taxonomic scope" value="Eukaryota"/>
</dbReference>
<dbReference type="HOGENOM" id="CLU_027041_0_0_1"/>
<dbReference type="InParanoid" id="Q6PBY7"/>
<dbReference type="OrthoDB" id="10250284at2759"/>
<dbReference type="PhylomeDB" id="Q6PBY7"/>
<dbReference type="TreeFam" id="TF314898"/>
<dbReference type="PRO" id="PR:Q6PBY7"/>
<dbReference type="Proteomes" id="UP000000437">
    <property type="component" value="Chromosome 10"/>
</dbReference>
<dbReference type="Bgee" id="ENSDARG00000033768">
    <property type="expression patterns" value="Expressed in mature ovarian follicle and 28 other cell types or tissues"/>
</dbReference>
<dbReference type="ExpressionAtlas" id="Q6PBY7">
    <property type="expression patterns" value="baseline"/>
</dbReference>
<dbReference type="GO" id="GO:1990072">
    <property type="term" value="C:TRAPPIII protein complex"/>
    <property type="evidence" value="ECO:0000318"/>
    <property type="project" value="GO_Central"/>
</dbReference>
<dbReference type="InterPro" id="IPR010378">
    <property type="entry name" value="TRAPPC13"/>
</dbReference>
<dbReference type="InterPro" id="IPR055428">
    <property type="entry name" value="TRAPPC13_C"/>
</dbReference>
<dbReference type="InterPro" id="IPR055429">
    <property type="entry name" value="TRAPPC13_M"/>
</dbReference>
<dbReference type="InterPro" id="IPR055427">
    <property type="entry name" value="TRAPPC13_N"/>
</dbReference>
<dbReference type="PANTHER" id="PTHR13134">
    <property type="entry name" value="TRAFFICKING PROTEIN PARTICLE COMPLEX SUBUNIT 13"/>
    <property type="match status" value="1"/>
</dbReference>
<dbReference type="PANTHER" id="PTHR13134:SF3">
    <property type="entry name" value="TRAFFICKING PROTEIN PARTICLE COMPLEX SUBUNIT 13"/>
    <property type="match status" value="1"/>
</dbReference>
<dbReference type="Pfam" id="PF23643">
    <property type="entry name" value="TRAPPC13_C"/>
    <property type="match status" value="1"/>
</dbReference>
<dbReference type="Pfam" id="PF23647">
    <property type="entry name" value="TRAPPC13_M"/>
    <property type="match status" value="1"/>
</dbReference>
<dbReference type="Pfam" id="PF06159">
    <property type="entry name" value="TRAPPC13_N"/>
    <property type="match status" value="1"/>
</dbReference>
<feature type="chain" id="PRO_0000321551" description="Trafficking protein particle complex subunit 13">
    <location>
        <begin position="1"/>
        <end position="412"/>
    </location>
</feature>